<keyword id="KW-1003">Cell membrane</keyword>
<keyword id="KW-0325">Glycoprotein</keyword>
<keyword id="KW-0472">Membrane</keyword>
<keyword id="KW-1185">Reference proteome</keyword>
<keyword id="KW-0762">Sugar transport</keyword>
<keyword id="KW-0812">Transmembrane</keyword>
<keyword id="KW-1133">Transmembrane helix</keyword>
<keyword id="KW-0813">Transport</keyword>
<sequence>MEDKEIGTPLPLPHSEARLQPTLVLTTLSAAFGSVFQYGYNIAVINTPHKVFKSFYNDTHFERHGTFMDESTLLLLWSCTVSMFPLGGLLGSLVVGLMVNKWGRKGTLLINNVFAITSAVLMGVSKVARAFELIILSRVLVGICAGIAYSTLPMYLGELAPQNLRGALGTMTEVFVIIGVLLAQIFSLQAILGNATGWPILLALTGVPAVIQLLSLPFFPESPRYTLIEKGDEETARQALRRLRGQNYNVEAEMEEMRTEERTEQAEGRLSVLNLFTFRPLRWQLISIVVLMAGQQLSGINAVNYYADVIYTSAGVDPTQSQYVTLGSGVINLVMTLVSAVIIERLGRRILLLSGYAICCSACLVLTVALLLQSTAPELSYLSIVCVFSYIVGHSIGPSPVPSVVRTEIVLQSSRTAAFTVDGAVHWLTNFIVGLTFPSIQVAIGAYSFLVFAGVCILTAAYIYVVIPETKGRTFVEINCAFAKRNGVEFPEEKEVATAKPHTPSLPTKETAF</sequence>
<feature type="chain" id="PRO_0000317272" description="Solute carrier family 2, facilitated glucose transporter member 7">
    <location>
        <begin position="1"/>
        <end position="513"/>
    </location>
</feature>
<feature type="topological domain" description="Cytoplasmic" evidence="3">
    <location>
        <begin position="1"/>
        <end position="21"/>
    </location>
</feature>
<feature type="transmembrane region" description="Helical" evidence="3">
    <location>
        <begin position="22"/>
        <end position="42"/>
    </location>
</feature>
<feature type="topological domain" description="Extracellular" evidence="3">
    <location>
        <begin position="43"/>
        <end position="78"/>
    </location>
</feature>
<feature type="transmembrane region" description="Helical" evidence="3">
    <location>
        <begin position="79"/>
        <end position="99"/>
    </location>
</feature>
<feature type="topological domain" description="Cytoplasmic" evidence="3">
    <location>
        <begin position="100"/>
        <end position="107"/>
    </location>
</feature>
<feature type="transmembrane region" description="Helical" evidence="3">
    <location>
        <begin position="108"/>
        <end position="128"/>
    </location>
</feature>
<feature type="topological domain" description="Extracellular" evidence="3">
    <location>
        <begin position="129"/>
        <end position="138"/>
    </location>
</feature>
<feature type="transmembrane region" description="Helical" evidence="3">
    <location>
        <begin position="139"/>
        <end position="159"/>
    </location>
</feature>
<feature type="topological domain" description="Cytoplasmic" evidence="3">
    <location>
        <begin position="160"/>
        <end position="172"/>
    </location>
</feature>
<feature type="transmembrane region" description="Helical" evidence="3">
    <location>
        <begin position="173"/>
        <end position="193"/>
    </location>
</feature>
<feature type="topological domain" description="Extracellular" evidence="3">
    <location>
        <begin position="194"/>
        <end position="198"/>
    </location>
</feature>
<feature type="transmembrane region" description="Helical" evidence="3">
    <location>
        <begin position="199"/>
        <end position="219"/>
    </location>
</feature>
<feature type="topological domain" description="Cytoplasmic" evidence="3">
    <location>
        <begin position="220"/>
        <end position="282"/>
    </location>
</feature>
<feature type="transmembrane region" description="Helical" evidence="3">
    <location>
        <begin position="283"/>
        <end position="303"/>
    </location>
</feature>
<feature type="topological domain" description="Extracellular" evidence="3">
    <location>
        <begin position="304"/>
        <end position="322"/>
    </location>
</feature>
<feature type="transmembrane region" description="Helical" evidence="3">
    <location>
        <begin position="323"/>
        <end position="343"/>
    </location>
</feature>
<feature type="topological domain" description="Cytoplasmic" evidence="3">
    <location>
        <begin position="344"/>
        <end position="351"/>
    </location>
</feature>
<feature type="transmembrane region" description="Helical" evidence="3">
    <location>
        <begin position="352"/>
        <end position="372"/>
    </location>
</feature>
<feature type="topological domain" description="Extracellular" evidence="3">
    <location>
        <begin position="373"/>
        <end position="380"/>
    </location>
</feature>
<feature type="transmembrane region" description="Helical" evidence="3">
    <location>
        <begin position="381"/>
        <end position="401"/>
    </location>
</feature>
<feature type="topological domain" description="Cytoplasmic" evidence="3">
    <location>
        <begin position="402"/>
        <end position="416"/>
    </location>
</feature>
<feature type="transmembrane region" description="Helical" evidence="3">
    <location>
        <begin position="417"/>
        <end position="437"/>
    </location>
</feature>
<feature type="topological domain" description="Extracellular" evidence="3">
    <location>
        <begin position="438"/>
        <end position="446"/>
    </location>
</feature>
<feature type="transmembrane region" description="Helical" evidence="3">
    <location>
        <begin position="447"/>
        <end position="467"/>
    </location>
</feature>
<feature type="topological domain" description="Cytoplasmic" evidence="3">
    <location>
        <begin position="468"/>
        <end position="513"/>
    </location>
</feature>
<feature type="region of interest" description="Disordered" evidence="4">
    <location>
        <begin position="494"/>
        <end position="513"/>
    </location>
</feature>
<feature type="binding site" evidence="1">
    <location>
        <begin position="295"/>
        <end position="296"/>
    </location>
    <ligand>
        <name>D-glucose</name>
        <dbReference type="ChEBI" id="CHEBI:4167"/>
    </ligand>
</feature>
<feature type="binding site" evidence="1">
    <location>
        <position position="301"/>
    </location>
    <ligand>
        <name>D-glucose</name>
        <dbReference type="ChEBI" id="CHEBI:4167"/>
    </ligand>
</feature>
<feature type="binding site" evidence="1">
    <location>
        <position position="332"/>
    </location>
    <ligand>
        <name>D-glucose</name>
        <dbReference type="ChEBI" id="CHEBI:4167"/>
    </ligand>
</feature>
<feature type="glycosylation site" description="N-linked (GlcNAc...) asparagine" evidence="3">
    <location>
        <position position="57"/>
    </location>
</feature>
<proteinExistence type="inferred from homology"/>
<accession>P0C6A1</accession>
<comment type="function">
    <text evidence="2">Probable sugar transporter. Even if its physiological substrate is subject to discussion, it is able to transport glucose and fructose. Does not transport galactose, 2-deoxy-d-glucose and xylose.</text>
</comment>
<comment type="catalytic activity">
    <reaction evidence="2">
        <text>D-glucose(out) = D-glucose(in)</text>
        <dbReference type="Rhea" id="RHEA:60376"/>
        <dbReference type="ChEBI" id="CHEBI:4167"/>
    </reaction>
</comment>
<comment type="catalytic activity">
    <reaction evidence="2">
        <text>D-fructose(out) = D-fructose(in)</text>
        <dbReference type="Rhea" id="RHEA:60372"/>
        <dbReference type="ChEBI" id="CHEBI:37721"/>
    </reaction>
</comment>
<comment type="subcellular location">
    <subcellularLocation>
        <location evidence="2">Cell membrane</location>
        <topology evidence="3">Multi-pass membrane protein</topology>
    </subcellularLocation>
    <subcellularLocation>
        <location evidence="2">Apical cell membrane</location>
        <topology evidence="3">Multi-pass membrane protein</topology>
    </subcellularLocation>
</comment>
<comment type="similarity">
    <text evidence="5">Belongs to the major facilitator superfamily. Sugar transporter (TC 2.A.1.1) family. Glucose transporter subfamily.</text>
</comment>
<comment type="caution">
    <text evidence="2">According to some reports, mediates transmembrane transport of glucose and fructose (By similarity). However, another group could not confirm transporter activity for glucose or fructose (By similarity).</text>
</comment>
<reference key="1">
    <citation type="journal article" date="2009" name="PLoS Biol.">
        <title>Lineage-specific biology revealed by a finished genome assembly of the mouse.</title>
        <authorList>
            <person name="Church D.M."/>
            <person name="Goodstadt L."/>
            <person name="Hillier L.W."/>
            <person name="Zody M.C."/>
            <person name="Goldstein S."/>
            <person name="She X."/>
            <person name="Bult C.J."/>
            <person name="Agarwala R."/>
            <person name="Cherry J.L."/>
            <person name="DiCuccio M."/>
            <person name="Hlavina W."/>
            <person name="Kapustin Y."/>
            <person name="Meric P."/>
            <person name="Maglott D."/>
            <person name="Birtle Z."/>
            <person name="Marques A.C."/>
            <person name="Graves T."/>
            <person name="Zhou S."/>
            <person name="Teague B."/>
            <person name="Potamousis K."/>
            <person name="Churas C."/>
            <person name="Place M."/>
            <person name="Herschleb J."/>
            <person name="Runnheim R."/>
            <person name="Forrest D."/>
            <person name="Amos-Landgraf J."/>
            <person name="Schwartz D.C."/>
            <person name="Cheng Z."/>
            <person name="Lindblad-Toh K."/>
            <person name="Eichler E.E."/>
            <person name="Ponting C.P."/>
        </authorList>
    </citation>
    <scope>NUCLEOTIDE SEQUENCE [LARGE SCALE GENOMIC DNA]</scope>
    <source>
        <strain>C57BL/6J</strain>
    </source>
</reference>
<dbReference type="EMBL" id="AL606971">
    <property type="status" value="NOT_ANNOTATED_CDS"/>
    <property type="molecule type" value="Genomic_DNA"/>
</dbReference>
<dbReference type="SMR" id="P0C6A1"/>
<dbReference type="FunCoup" id="P0C6A1">
    <property type="interactions" value="114"/>
</dbReference>
<dbReference type="STRING" id="10090.ENSMUSP00000059106"/>
<dbReference type="GlyCosmos" id="P0C6A1">
    <property type="glycosylation" value="1 site, No reported glycans"/>
</dbReference>
<dbReference type="GlyGen" id="P0C6A1">
    <property type="glycosylation" value="2 sites, 1 N-linked glycan (1 site)"/>
</dbReference>
<dbReference type="PaxDb" id="10090-ENSMUSP00000059106"/>
<dbReference type="ProteomicsDB" id="271188"/>
<dbReference type="AGR" id="MGI:3650865"/>
<dbReference type="MGI" id="MGI:3650865">
    <property type="gene designation" value="Slc2a7"/>
</dbReference>
<dbReference type="eggNOG" id="KOG0569">
    <property type="taxonomic scope" value="Eukaryota"/>
</dbReference>
<dbReference type="InParanoid" id="P0C6A1"/>
<dbReference type="Reactome" id="R-MMU-189200">
    <property type="pathway name" value="Cellular hexose transport"/>
</dbReference>
<dbReference type="PRO" id="PR:P0C6A1"/>
<dbReference type="Proteomes" id="UP000000589">
    <property type="component" value="Unplaced"/>
</dbReference>
<dbReference type="RNAct" id="P0C6A1">
    <property type="molecule type" value="protein"/>
</dbReference>
<dbReference type="GO" id="GO:0016324">
    <property type="term" value="C:apical plasma membrane"/>
    <property type="evidence" value="ECO:0007669"/>
    <property type="project" value="UniProtKB-SubCell"/>
</dbReference>
<dbReference type="GO" id="GO:0005886">
    <property type="term" value="C:plasma membrane"/>
    <property type="evidence" value="ECO:0000250"/>
    <property type="project" value="UniProtKB"/>
</dbReference>
<dbReference type="GO" id="GO:0015149">
    <property type="term" value="F:hexose transmembrane transporter activity"/>
    <property type="evidence" value="ECO:0007669"/>
    <property type="project" value="UniProtKB-ARBA"/>
</dbReference>
<dbReference type="CDD" id="cd17432">
    <property type="entry name" value="MFS_GLUT_Class2"/>
    <property type="match status" value="1"/>
</dbReference>
<dbReference type="FunFam" id="1.20.1250.20:FF:000029">
    <property type="entry name" value="solute carrier family 2, facilitated glucose transporter member 4"/>
    <property type="match status" value="1"/>
</dbReference>
<dbReference type="Gene3D" id="1.20.1250.20">
    <property type="entry name" value="MFS general substrate transporter like domains"/>
    <property type="match status" value="1"/>
</dbReference>
<dbReference type="InterPro" id="IPR045263">
    <property type="entry name" value="GLUT"/>
</dbReference>
<dbReference type="InterPro" id="IPR020846">
    <property type="entry name" value="MFS_dom"/>
</dbReference>
<dbReference type="InterPro" id="IPR005828">
    <property type="entry name" value="MFS_sugar_transport-like"/>
</dbReference>
<dbReference type="InterPro" id="IPR036259">
    <property type="entry name" value="MFS_trans_sf"/>
</dbReference>
<dbReference type="InterPro" id="IPR003663">
    <property type="entry name" value="Sugar/inositol_transpt"/>
</dbReference>
<dbReference type="InterPro" id="IPR005829">
    <property type="entry name" value="Sugar_transporter_CS"/>
</dbReference>
<dbReference type="NCBIfam" id="TIGR00879">
    <property type="entry name" value="SP"/>
    <property type="match status" value="1"/>
</dbReference>
<dbReference type="PANTHER" id="PTHR23503">
    <property type="entry name" value="SOLUTE CARRIER FAMILY 2"/>
    <property type="match status" value="1"/>
</dbReference>
<dbReference type="PANTHER" id="PTHR23503:SF30">
    <property type="entry name" value="SOLUTE CARRIER FAMILY 2, FACILITATED GLUCOSE TRANSPORTER MEMBER 7"/>
    <property type="match status" value="1"/>
</dbReference>
<dbReference type="Pfam" id="PF00083">
    <property type="entry name" value="Sugar_tr"/>
    <property type="match status" value="1"/>
</dbReference>
<dbReference type="PRINTS" id="PR00171">
    <property type="entry name" value="SUGRTRNSPORT"/>
</dbReference>
<dbReference type="SUPFAM" id="SSF103473">
    <property type="entry name" value="MFS general substrate transporter"/>
    <property type="match status" value="1"/>
</dbReference>
<dbReference type="PROSITE" id="PS50850">
    <property type="entry name" value="MFS"/>
    <property type="match status" value="1"/>
</dbReference>
<dbReference type="PROSITE" id="PS00216">
    <property type="entry name" value="SUGAR_TRANSPORT_1"/>
    <property type="match status" value="1"/>
</dbReference>
<dbReference type="PROSITE" id="PS00217">
    <property type="entry name" value="SUGAR_TRANSPORT_2"/>
    <property type="match status" value="1"/>
</dbReference>
<protein>
    <recommendedName>
        <fullName evidence="5">Solute carrier family 2, facilitated glucose transporter member 7</fullName>
    </recommendedName>
    <alternativeName>
        <fullName evidence="2">Glucose transporter type 7</fullName>
        <shortName evidence="2">GLUT-7</shortName>
    </alternativeName>
</protein>
<gene>
    <name evidence="6" type="primary">Slc2a7</name>
</gene>
<name>GTR7_MOUSE</name>
<evidence type="ECO:0000250" key="1">
    <source>
        <dbReference type="UniProtKB" id="P11169"/>
    </source>
</evidence>
<evidence type="ECO:0000250" key="2">
    <source>
        <dbReference type="UniProtKB" id="Q6PXP3"/>
    </source>
</evidence>
<evidence type="ECO:0000255" key="3"/>
<evidence type="ECO:0000256" key="4">
    <source>
        <dbReference type="SAM" id="MobiDB-lite"/>
    </source>
</evidence>
<evidence type="ECO:0000305" key="5"/>
<evidence type="ECO:0000312" key="6">
    <source>
        <dbReference type="MGI" id="MGI:3650865"/>
    </source>
</evidence>
<organism>
    <name type="scientific">Mus musculus</name>
    <name type="common">Mouse</name>
    <dbReference type="NCBI Taxonomy" id="10090"/>
    <lineage>
        <taxon>Eukaryota</taxon>
        <taxon>Metazoa</taxon>
        <taxon>Chordata</taxon>
        <taxon>Craniata</taxon>
        <taxon>Vertebrata</taxon>
        <taxon>Euteleostomi</taxon>
        <taxon>Mammalia</taxon>
        <taxon>Eutheria</taxon>
        <taxon>Euarchontoglires</taxon>
        <taxon>Glires</taxon>
        <taxon>Rodentia</taxon>
        <taxon>Myomorpha</taxon>
        <taxon>Muroidea</taxon>
        <taxon>Muridae</taxon>
        <taxon>Murinae</taxon>
        <taxon>Mus</taxon>
        <taxon>Mus</taxon>
    </lineage>
</organism>